<gene>
    <name evidence="1" type="primary">yeaL</name>
    <name type="ordered locus">SPC_2461</name>
</gene>
<sequence length="148" mass="15344">MFDVTLLILLGLAALGFISHNTTVAVSILVLIIVRVTPLNTFFPWIEKQGLTVGIIILTIGVMAPIASGTLPPSTLIHSFVNWKSLVAIAVGVFVSWLGGRGITLMGNQPQLVAGLLVGTVLGVALFRGVPVGPLIAAGLVSLIVGKQ</sequence>
<keyword id="KW-1003">Cell membrane</keyword>
<keyword id="KW-0472">Membrane</keyword>
<keyword id="KW-0812">Transmembrane</keyword>
<keyword id="KW-1133">Transmembrane helix</keyword>
<dbReference type="EMBL" id="CP000857">
    <property type="protein sequence ID" value="ACN46569.1"/>
    <property type="molecule type" value="Genomic_DNA"/>
</dbReference>
<dbReference type="RefSeq" id="WP_000460698.1">
    <property type="nucleotide sequence ID" value="NC_012125.1"/>
</dbReference>
<dbReference type="KEGG" id="sei:SPC_2461"/>
<dbReference type="HOGENOM" id="CLU_125889_0_0_6"/>
<dbReference type="Proteomes" id="UP000001599">
    <property type="component" value="Chromosome"/>
</dbReference>
<dbReference type="GO" id="GO:0005886">
    <property type="term" value="C:plasma membrane"/>
    <property type="evidence" value="ECO:0007669"/>
    <property type="project" value="UniProtKB-SubCell"/>
</dbReference>
<dbReference type="HAMAP" id="MF_01874">
    <property type="entry name" value="UPF0756"/>
    <property type="match status" value="1"/>
</dbReference>
<dbReference type="InterPro" id="IPR007382">
    <property type="entry name" value="UPF0756_TM"/>
</dbReference>
<dbReference type="PANTHER" id="PTHR38452">
    <property type="entry name" value="UPF0756 MEMBRANE PROTEIN YEAL"/>
    <property type="match status" value="1"/>
</dbReference>
<dbReference type="PANTHER" id="PTHR38452:SF1">
    <property type="entry name" value="UPF0756 MEMBRANE PROTEIN YEAL"/>
    <property type="match status" value="1"/>
</dbReference>
<dbReference type="Pfam" id="PF04284">
    <property type="entry name" value="DUF441"/>
    <property type="match status" value="1"/>
</dbReference>
<name>YEAL_SALPC</name>
<comment type="subcellular location">
    <subcellularLocation>
        <location evidence="1">Cell membrane</location>
        <topology evidence="1">Multi-pass membrane protein</topology>
    </subcellularLocation>
</comment>
<comment type="similarity">
    <text evidence="1">Belongs to the UPF0756 family.</text>
</comment>
<organism>
    <name type="scientific">Salmonella paratyphi C (strain RKS4594)</name>
    <dbReference type="NCBI Taxonomy" id="476213"/>
    <lineage>
        <taxon>Bacteria</taxon>
        <taxon>Pseudomonadati</taxon>
        <taxon>Pseudomonadota</taxon>
        <taxon>Gammaproteobacteria</taxon>
        <taxon>Enterobacterales</taxon>
        <taxon>Enterobacteriaceae</taxon>
        <taxon>Salmonella</taxon>
    </lineage>
</organism>
<proteinExistence type="inferred from homology"/>
<evidence type="ECO:0000255" key="1">
    <source>
        <dbReference type="HAMAP-Rule" id="MF_01874"/>
    </source>
</evidence>
<protein>
    <recommendedName>
        <fullName evidence="1">UPF0756 membrane protein YeaL</fullName>
    </recommendedName>
</protein>
<accession>C0Q711</accession>
<reference key="1">
    <citation type="journal article" date="2009" name="PLoS ONE">
        <title>Salmonella paratyphi C: genetic divergence from Salmonella choleraesuis and pathogenic convergence with Salmonella typhi.</title>
        <authorList>
            <person name="Liu W.-Q."/>
            <person name="Feng Y."/>
            <person name="Wang Y."/>
            <person name="Zou Q.-H."/>
            <person name="Chen F."/>
            <person name="Guo J.-T."/>
            <person name="Peng Y.-H."/>
            <person name="Jin Y."/>
            <person name="Li Y.-G."/>
            <person name="Hu S.-N."/>
            <person name="Johnston R.N."/>
            <person name="Liu G.-R."/>
            <person name="Liu S.-L."/>
        </authorList>
    </citation>
    <scope>NUCLEOTIDE SEQUENCE [LARGE SCALE GENOMIC DNA]</scope>
    <source>
        <strain>RKS4594</strain>
    </source>
</reference>
<feature type="chain" id="PRO_0000388931" description="UPF0756 membrane protein YeaL">
    <location>
        <begin position="1"/>
        <end position="148"/>
    </location>
</feature>
<feature type="transmembrane region" description="Helical" evidence="1">
    <location>
        <begin position="14"/>
        <end position="34"/>
    </location>
</feature>
<feature type="transmembrane region" description="Helical" evidence="1">
    <location>
        <begin position="51"/>
        <end position="71"/>
    </location>
</feature>
<feature type="transmembrane region" description="Helical" evidence="1">
    <location>
        <begin position="86"/>
        <end position="106"/>
    </location>
</feature>
<feature type="transmembrane region" description="Helical" evidence="1">
    <location>
        <begin position="121"/>
        <end position="141"/>
    </location>
</feature>